<feature type="chain" id="PRO_0000241401" description="Large ribosomal subunit protein uL3">
    <location>
        <begin position="1"/>
        <end position="235"/>
    </location>
</feature>
<feature type="modified residue" description="N5-methylglutamine" evidence="1">
    <location>
        <position position="151"/>
    </location>
</feature>
<keyword id="KW-0488">Methylation</keyword>
<keyword id="KW-1185">Reference proteome</keyword>
<keyword id="KW-0687">Ribonucleoprotein</keyword>
<keyword id="KW-0689">Ribosomal protein</keyword>
<keyword id="KW-0694">RNA-binding</keyword>
<keyword id="KW-0699">rRNA-binding</keyword>
<gene>
    <name evidence="1" type="primary">rplC</name>
    <name type="ordered locus">Rru_A2688</name>
</gene>
<name>RL3_RHORT</name>
<accession>Q2RQW0</accession>
<protein>
    <recommendedName>
        <fullName evidence="1">Large ribosomal subunit protein uL3</fullName>
    </recommendedName>
    <alternativeName>
        <fullName evidence="2">50S ribosomal protein L3</fullName>
    </alternativeName>
</protein>
<reference key="1">
    <citation type="journal article" date="2011" name="Stand. Genomic Sci.">
        <title>Complete genome sequence of Rhodospirillum rubrum type strain (S1).</title>
        <authorList>
            <person name="Munk A.C."/>
            <person name="Copeland A."/>
            <person name="Lucas S."/>
            <person name="Lapidus A."/>
            <person name="Del Rio T.G."/>
            <person name="Barry K."/>
            <person name="Detter J.C."/>
            <person name="Hammon N."/>
            <person name="Israni S."/>
            <person name="Pitluck S."/>
            <person name="Brettin T."/>
            <person name="Bruce D."/>
            <person name="Han C."/>
            <person name="Tapia R."/>
            <person name="Gilna P."/>
            <person name="Schmutz J."/>
            <person name="Larimer F."/>
            <person name="Land M."/>
            <person name="Kyrpides N.C."/>
            <person name="Mavromatis K."/>
            <person name="Richardson P."/>
            <person name="Rohde M."/>
            <person name="Goeker M."/>
            <person name="Klenk H.P."/>
            <person name="Zhang Y."/>
            <person name="Roberts G.P."/>
            <person name="Reslewic S."/>
            <person name="Schwartz D.C."/>
        </authorList>
    </citation>
    <scope>NUCLEOTIDE SEQUENCE [LARGE SCALE GENOMIC DNA]</scope>
    <source>
        <strain>ATCC 11170 / ATH 1.1.1 / DSM 467 / LMG 4362 / NCIMB 8255 / S1</strain>
    </source>
</reference>
<sequence>MRSGLIAQKVGMTRLFTDEGTHVPVTVLKVEACQVVAVRTSETDGYTAVQLGAGVAKVKRTSKAMRGHFAAAKVEPKKKVVEFRVSEDCLLEPGAELSAAHFVAGQKVDIAGTTIGKGFAGAMKRHNFRGLEATHGVSVSHRSHGSTGQCQDPGRVFKGKKMAGHMGDTRITQQSLTVVATDADRGLILVKGSVPGADGAWLEVRDAVKKKLPEGVPLPAGLKAAVEAAVDGEKE</sequence>
<evidence type="ECO:0000255" key="1">
    <source>
        <dbReference type="HAMAP-Rule" id="MF_01325"/>
    </source>
</evidence>
<evidence type="ECO:0000305" key="2"/>
<comment type="function">
    <text evidence="1">One of the primary rRNA binding proteins, it binds directly near the 3'-end of the 23S rRNA, where it nucleates assembly of the 50S subunit.</text>
</comment>
<comment type="subunit">
    <text evidence="1">Part of the 50S ribosomal subunit. Forms a cluster with proteins L14 and L19.</text>
</comment>
<comment type="PTM">
    <text evidence="1">Methylated by PrmB.</text>
</comment>
<comment type="similarity">
    <text evidence="1">Belongs to the universal ribosomal protein uL3 family.</text>
</comment>
<proteinExistence type="inferred from homology"/>
<dbReference type="EMBL" id="CP000230">
    <property type="protein sequence ID" value="ABC23485.1"/>
    <property type="molecule type" value="Genomic_DNA"/>
</dbReference>
<dbReference type="RefSeq" id="WP_011390498.1">
    <property type="nucleotide sequence ID" value="NC_007643.1"/>
</dbReference>
<dbReference type="RefSeq" id="YP_427772.1">
    <property type="nucleotide sequence ID" value="NC_007643.1"/>
</dbReference>
<dbReference type="SMR" id="Q2RQW0"/>
<dbReference type="STRING" id="269796.Rru_A2688"/>
<dbReference type="EnsemblBacteria" id="ABC23485">
    <property type="protein sequence ID" value="ABC23485"/>
    <property type="gene ID" value="Rru_A2688"/>
</dbReference>
<dbReference type="KEGG" id="rru:Rru_A2688"/>
<dbReference type="PATRIC" id="fig|269796.9.peg.2795"/>
<dbReference type="eggNOG" id="COG0087">
    <property type="taxonomic scope" value="Bacteria"/>
</dbReference>
<dbReference type="HOGENOM" id="CLU_044142_2_0_5"/>
<dbReference type="PhylomeDB" id="Q2RQW0"/>
<dbReference type="Proteomes" id="UP000001929">
    <property type="component" value="Chromosome"/>
</dbReference>
<dbReference type="GO" id="GO:0022625">
    <property type="term" value="C:cytosolic large ribosomal subunit"/>
    <property type="evidence" value="ECO:0007669"/>
    <property type="project" value="TreeGrafter"/>
</dbReference>
<dbReference type="GO" id="GO:0019843">
    <property type="term" value="F:rRNA binding"/>
    <property type="evidence" value="ECO:0007669"/>
    <property type="project" value="UniProtKB-UniRule"/>
</dbReference>
<dbReference type="GO" id="GO:0003735">
    <property type="term" value="F:structural constituent of ribosome"/>
    <property type="evidence" value="ECO:0007669"/>
    <property type="project" value="InterPro"/>
</dbReference>
<dbReference type="GO" id="GO:0006412">
    <property type="term" value="P:translation"/>
    <property type="evidence" value="ECO:0007669"/>
    <property type="project" value="UniProtKB-UniRule"/>
</dbReference>
<dbReference type="FunFam" id="2.40.30.10:FF:000004">
    <property type="entry name" value="50S ribosomal protein L3"/>
    <property type="match status" value="1"/>
</dbReference>
<dbReference type="FunFam" id="3.30.160.810:FF:000001">
    <property type="entry name" value="50S ribosomal protein L3"/>
    <property type="match status" value="1"/>
</dbReference>
<dbReference type="Gene3D" id="3.30.160.810">
    <property type="match status" value="1"/>
</dbReference>
<dbReference type="Gene3D" id="2.40.30.10">
    <property type="entry name" value="Translation factors"/>
    <property type="match status" value="1"/>
</dbReference>
<dbReference type="HAMAP" id="MF_01325_B">
    <property type="entry name" value="Ribosomal_uL3_B"/>
    <property type="match status" value="1"/>
</dbReference>
<dbReference type="InterPro" id="IPR000597">
    <property type="entry name" value="Ribosomal_uL3"/>
</dbReference>
<dbReference type="InterPro" id="IPR019927">
    <property type="entry name" value="Ribosomal_uL3_bac/org-type"/>
</dbReference>
<dbReference type="InterPro" id="IPR019926">
    <property type="entry name" value="Ribosomal_uL3_CS"/>
</dbReference>
<dbReference type="InterPro" id="IPR009000">
    <property type="entry name" value="Transl_B-barrel_sf"/>
</dbReference>
<dbReference type="NCBIfam" id="TIGR03625">
    <property type="entry name" value="L3_bact"/>
    <property type="match status" value="1"/>
</dbReference>
<dbReference type="PANTHER" id="PTHR11229">
    <property type="entry name" value="50S RIBOSOMAL PROTEIN L3"/>
    <property type="match status" value="1"/>
</dbReference>
<dbReference type="PANTHER" id="PTHR11229:SF16">
    <property type="entry name" value="LARGE RIBOSOMAL SUBUNIT PROTEIN UL3C"/>
    <property type="match status" value="1"/>
</dbReference>
<dbReference type="Pfam" id="PF00297">
    <property type="entry name" value="Ribosomal_L3"/>
    <property type="match status" value="1"/>
</dbReference>
<dbReference type="SUPFAM" id="SSF50447">
    <property type="entry name" value="Translation proteins"/>
    <property type="match status" value="1"/>
</dbReference>
<dbReference type="PROSITE" id="PS00474">
    <property type="entry name" value="RIBOSOMAL_L3"/>
    <property type="match status" value="1"/>
</dbReference>
<organism>
    <name type="scientific">Rhodospirillum rubrum (strain ATCC 11170 / ATH 1.1.1 / DSM 467 / LMG 4362 / NCIMB 8255 / S1)</name>
    <dbReference type="NCBI Taxonomy" id="269796"/>
    <lineage>
        <taxon>Bacteria</taxon>
        <taxon>Pseudomonadati</taxon>
        <taxon>Pseudomonadota</taxon>
        <taxon>Alphaproteobacteria</taxon>
        <taxon>Rhodospirillales</taxon>
        <taxon>Rhodospirillaceae</taxon>
        <taxon>Rhodospirillum</taxon>
    </lineage>
</organism>